<gene>
    <name evidence="1" type="primary">ndk</name>
    <name type="ordered locus">Smlt2054</name>
</gene>
<feature type="chain" id="PRO_1000125022" description="Nucleoside diphosphate kinase">
    <location>
        <begin position="1"/>
        <end position="141"/>
    </location>
</feature>
<feature type="active site" description="Pros-phosphohistidine intermediate" evidence="1">
    <location>
        <position position="117"/>
    </location>
</feature>
<feature type="binding site" evidence="1">
    <location>
        <position position="11"/>
    </location>
    <ligand>
        <name>ATP</name>
        <dbReference type="ChEBI" id="CHEBI:30616"/>
    </ligand>
</feature>
<feature type="binding site" evidence="1">
    <location>
        <position position="59"/>
    </location>
    <ligand>
        <name>ATP</name>
        <dbReference type="ChEBI" id="CHEBI:30616"/>
    </ligand>
</feature>
<feature type="binding site" evidence="1">
    <location>
        <position position="87"/>
    </location>
    <ligand>
        <name>ATP</name>
        <dbReference type="ChEBI" id="CHEBI:30616"/>
    </ligand>
</feature>
<feature type="binding site" evidence="1">
    <location>
        <position position="93"/>
    </location>
    <ligand>
        <name>ATP</name>
        <dbReference type="ChEBI" id="CHEBI:30616"/>
    </ligand>
</feature>
<feature type="binding site" evidence="1">
    <location>
        <position position="104"/>
    </location>
    <ligand>
        <name>ATP</name>
        <dbReference type="ChEBI" id="CHEBI:30616"/>
    </ligand>
</feature>
<feature type="binding site" evidence="1">
    <location>
        <position position="114"/>
    </location>
    <ligand>
        <name>ATP</name>
        <dbReference type="ChEBI" id="CHEBI:30616"/>
    </ligand>
</feature>
<evidence type="ECO:0000255" key="1">
    <source>
        <dbReference type="HAMAP-Rule" id="MF_00451"/>
    </source>
</evidence>
<proteinExistence type="inferred from homology"/>
<accession>B2FNQ5</accession>
<reference key="1">
    <citation type="journal article" date="2008" name="Genome Biol.">
        <title>The complete genome, comparative and functional analysis of Stenotrophomonas maltophilia reveals an organism heavily shielded by drug resistance determinants.</title>
        <authorList>
            <person name="Crossman L.C."/>
            <person name="Gould V.C."/>
            <person name="Dow J.M."/>
            <person name="Vernikos G.S."/>
            <person name="Okazaki A."/>
            <person name="Sebaihia M."/>
            <person name="Saunders D."/>
            <person name="Arrowsmith C."/>
            <person name="Carver T."/>
            <person name="Peters N."/>
            <person name="Adlem E."/>
            <person name="Kerhornou A."/>
            <person name="Lord A."/>
            <person name="Murphy L."/>
            <person name="Seeger K."/>
            <person name="Squares R."/>
            <person name="Rutter S."/>
            <person name="Quail M.A."/>
            <person name="Rajandream M.A."/>
            <person name="Harris D."/>
            <person name="Churcher C."/>
            <person name="Bentley S.D."/>
            <person name="Parkhill J."/>
            <person name="Thomson N.R."/>
            <person name="Avison M.B."/>
        </authorList>
    </citation>
    <scope>NUCLEOTIDE SEQUENCE [LARGE SCALE GENOMIC DNA]</scope>
    <source>
        <strain>K279a</strain>
    </source>
</reference>
<dbReference type="EC" id="2.7.4.6" evidence="1"/>
<dbReference type="EMBL" id="AM743169">
    <property type="protein sequence ID" value="CAQ45561.1"/>
    <property type="molecule type" value="Genomic_DNA"/>
</dbReference>
<dbReference type="RefSeq" id="WP_005409295.1">
    <property type="nucleotide sequence ID" value="NC_010943.1"/>
</dbReference>
<dbReference type="SMR" id="B2FNQ5"/>
<dbReference type="EnsemblBacteria" id="CAQ45561">
    <property type="protein sequence ID" value="CAQ45561"/>
    <property type="gene ID" value="Smlt2054"/>
</dbReference>
<dbReference type="GeneID" id="97260818"/>
<dbReference type="KEGG" id="sml:Smlt2054"/>
<dbReference type="eggNOG" id="COG0105">
    <property type="taxonomic scope" value="Bacteria"/>
</dbReference>
<dbReference type="HOGENOM" id="CLU_060216_8_1_6"/>
<dbReference type="Proteomes" id="UP000008840">
    <property type="component" value="Chromosome"/>
</dbReference>
<dbReference type="GO" id="GO:0005737">
    <property type="term" value="C:cytoplasm"/>
    <property type="evidence" value="ECO:0007669"/>
    <property type="project" value="UniProtKB-SubCell"/>
</dbReference>
<dbReference type="GO" id="GO:0005524">
    <property type="term" value="F:ATP binding"/>
    <property type="evidence" value="ECO:0007669"/>
    <property type="project" value="UniProtKB-UniRule"/>
</dbReference>
<dbReference type="GO" id="GO:0046872">
    <property type="term" value="F:metal ion binding"/>
    <property type="evidence" value="ECO:0007669"/>
    <property type="project" value="UniProtKB-KW"/>
</dbReference>
<dbReference type="GO" id="GO:0004550">
    <property type="term" value="F:nucleoside diphosphate kinase activity"/>
    <property type="evidence" value="ECO:0007669"/>
    <property type="project" value="UniProtKB-UniRule"/>
</dbReference>
<dbReference type="GO" id="GO:0006241">
    <property type="term" value="P:CTP biosynthetic process"/>
    <property type="evidence" value="ECO:0007669"/>
    <property type="project" value="UniProtKB-UniRule"/>
</dbReference>
<dbReference type="GO" id="GO:0006183">
    <property type="term" value="P:GTP biosynthetic process"/>
    <property type="evidence" value="ECO:0007669"/>
    <property type="project" value="UniProtKB-UniRule"/>
</dbReference>
<dbReference type="GO" id="GO:0006228">
    <property type="term" value="P:UTP biosynthetic process"/>
    <property type="evidence" value="ECO:0007669"/>
    <property type="project" value="UniProtKB-UniRule"/>
</dbReference>
<dbReference type="CDD" id="cd04413">
    <property type="entry name" value="NDPk_I"/>
    <property type="match status" value="1"/>
</dbReference>
<dbReference type="FunFam" id="3.30.70.141:FF:000001">
    <property type="entry name" value="Nucleoside diphosphate kinase"/>
    <property type="match status" value="1"/>
</dbReference>
<dbReference type="Gene3D" id="3.30.70.141">
    <property type="entry name" value="Nucleoside diphosphate kinase-like domain"/>
    <property type="match status" value="1"/>
</dbReference>
<dbReference type="HAMAP" id="MF_00451">
    <property type="entry name" value="NDP_kinase"/>
    <property type="match status" value="1"/>
</dbReference>
<dbReference type="InterPro" id="IPR034907">
    <property type="entry name" value="NDK-like_dom"/>
</dbReference>
<dbReference type="InterPro" id="IPR036850">
    <property type="entry name" value="NDK-like_dom_sf"/>
</dbReference>
<dbReference type="InterPro" id="IPR001564">
    <property type="entry name" value="Nucleoside_diP_kinase"/>
</dbReference>
<dbReference type="InterPro" id="IPR023005">
    <property type="entry name" value="Nucleoside_diP_kinase_AS"/>
</dbReference>
<dbReference type="NCBIfam" id="NF001908">
    <property type="entry name" value="PRK00668.1"/>
    <property type="match status" value="1"/>
</dbReference>
<dbReference type="PANTHER" id="PTHR11349">
    <property type="entry name" value="NUCLEOSIDE DIPHOSPHATE KINASE"/>
    <property type="match status" value="1"/>
</dbReference>
<dbReference type="Pfam" id="PF00334">
    <property type="entry name" value="NDK"/>
    <property type="match status" value="1"/>
</dbReference>
<dbReference type="PRINTS" id="PR01243">
    <property type="entry name" value="NUCDPKINASE"/>
</dbReference>
<dbReference type="SMART" id="SM00562">
    <property type="entry name" value="NDK"/>
    <property type="match status" value="1"/>
</dbReference>
<dbReference type="SUPFAM" id="SSF54919">
    <property type="entry name" value="Nucleoside diphosphate kinase, NDK"/>
    <property type="match status" value="1"/>
</dbReference>
<dbReference type="PROSITE" id="PS00469">
    <property type="entry name" value="NDPK"/>
    <property type="match status" value="1"/>
</dbReference>
<dbReference type="PROSITE" id="PS51374">
    <property type="entry name" value="NDPK_LIKE"/>
    <property type="match status" value="1"/>
</dbReference>
<comment type="function">
    <text evidence="1">Major role in the synthesis of nucleoside triphosphates other than ATP. The ATP gamma phosphate is transferred to the NDP beta phosphate via a ping-pong mechanism, using a phosphorylated active-site intermediate.</text>
</comment>
<comment type="catalytic activity">
    <reaction evidence="1">
        <text>a 2'-deoxyribonucleoside 5'-diphosphate + ATP = a 2'-deoxyribonucleoside 5'-triphosphate + ADP</text>
        <dbReference type="Rhea" id="RHEA:44640"/>
        <dbReference type="ChEBI" id="CHEBI:30616"/>
        <dbReference type="ChEBI" id="CHEBI:61560"/>
        <dbReference type="ChEBI" id="CHEBI:73316"/>
        <dbReference type="ChEBI" id="CHEBI:456216"/>
        <dbReference type="EC" id="2.7.4.6"/>
    </reaction>
</comment>
<comment type="catalytic activity">
    <reaction evidence="1">
        <text>a ribonucleoside 5'-diphosphate + ATP = a ribonucleoside 5'-triphosphate + ADP</text>
        <dbReference type="Rhea" id="RHEA:18113"/>
        <dbReference type="ChEBI" id="CHEBI:30616"/>
        <dbReference type="ChEBI" id="CHEBI:57930"/>
        <dbReference type="ChEBI" id="CHEBI:61557"/>
        <dbReference type="ChEBI" id="CHEBI:456216"/>
        <dbReference type="EC" id="2.7.4.6"/>
    </reaction>
</comment>
<comment type="cofactor">
    <cofactor evidence="1">
        <name>Mg(2+)</name>
        <dbReference type="ChEBI" id="CHEBI:18420"/>
    </cofactor>
</comment>
<comment type="subunit">
    <text evidence="1">Homotetramer.</text>
</comment>
<comment type="subcellular location">
    <subcellularLocation>
        <location evidence="1">Cytoplasm</location>
    </subcellularLocation>
</comment>
<comment type="similarity">
    <text evidence="1">Belongs to the NDK family.</text>
</comment>
<name>NDK_STRMK</name>
<organism>
    <name type="scientific">Stenotrophomonas maltophilia (strain K279a)</name>
    <dbReference type="NCBI Taxonomy" id="522373"/>
    <lineage>
        <taxon>Bacteria</taxon>
        <taxon>Pseudomonadati</taxon>
        <taxon>Pseudomonadota</taxon>
        <taxon>Gammaproteobacteria</taxon>
        <taxon>Lysobacterales</taxon>
        <taxon>Lysobacteraceae</taxon>
        <taxon>Stenotrophomonas</taxon>
        <taxon>Stenotrophomonas maltophilia group</taxon>
    </lineage>
</organism>
<keyword id="KW-0067">ATP-binding</keyword>
<keyword id="KW-0963">Cytoplasm</keyword>
<keyword id="KW-0418">Kinase</keyword>
<keyword id="KW-0460">Magnesium</keyword>
<keyword id="KW-0479">Metal-binding</keyword>
<keyword id="KW-0546">Nucleotide metabolism</keyword>
<keyword id="KW-0547">Nucleotide-binding</keyword>
<keyword id="KW-0597">Phosphoprotein</keyword>
<keyword id="KW-1185">Reference proteome</keyword>
<keyword id="KW-0808">Transferase</keyword>
<protein>
    <recommendedName>
        <fullName evidence="1">Nucleoside diphosphate kinase</fullName>
        <shortName evidence="1">NDK</shortName>
        <shortName evidence="1">NDP kinase</shortName>
        <ecNumber evidence="1">2.7.4.6</ecNumber>
    </recommendedName>
    <alternativeName>
        <fullName evidence="1">Nucleoside-2-P kinase</fullName>
    </alternativeName>
</protein>
<sequence length="141" mass="15324">MALERTLSIIKPDAVAKNVIGEIYARFEKAGLKVVAAKYKQLSRREAEGFYAVHRERPFFNALVEFMISGPVMIQALEGENAVLAHRDLLGATNPKEAAPGTIRADFAESIDANAAHGSDSVENAAIEIAYFFAATEVVSR</sequence>